<feature type="chain" id="PRO_0000090990" description="Elongation factor 1-alpha">
    <location>
        <begin position="1"/>
        <end position="428"/>
    </location>
</feature>
<feature type="domain" description="tr-type G">
    <location>
        <begin position="5"/>
        <end position="217"/>
    </location>
</feature>
<feature type="region of interest" description="G1" evidence="1">
    <location>
        <begin position="14"/>
        <end position="21"/>
    </location>
</feature>
<feature type="region of interest" description="G2" evidence="1">
    <location>
        <begin position="68"/>
        <end position="72"/>
    </location>
</feature>
<feature type="region of interest" description="G3" evidence="1">
    <location>
        <begin position="89"/>
        <end position="92"/>
    </location>
</feature>
<feature type="region of interest" description="G4" evidence="1">
    <location>
        <begin position="144"/>
        <end position="147"/>
    </location>
</feature>
<feature type="region of interest" description="G5" evidence="1">
    <location>
        <begin position="181"/>
        <end position="183"/>
    </location>
</feature>
<feature type="binding site" evidence="2">
    <location>
        <begin position="14"/>
        <end position="21"/>
    </location>
    <ligand>
        <name>GTP</name>
        <dbReference type="ChEBI" id="CHEBI:37565"/>
    </ligand>
</feature>
<feature type="binding site" evidence="2">
    <location>
        <position position="21"/>
    </location>
    <ligand>
        <name>Mg(2+)</name>
        <dbReference type="ChEBI" id="CHEBI:18420"/>
    </ligand>
</feature>
<feature type="binding site" evidence="2">
    <location>
        <begin position="89"/>
        <end position="93"/>
    </location>
    <ligand>
        <name>GTP</name>
        <dbReference type="ChEBI" id="CHEBI:37565"/>
    </ligand>
</feature>
<feature type="binding site" evidence="2">
    <location>
        <begin position="144"/>
        <end position="147"/>
    </location>
    <ligand>
        <name>GTP</name>
        <dbReference type="ChEBI" id="CHEBI:37565"/>
    </ligand>
</feature>
<feature type="strand" evidence="4">
    <location>
        <begin position="7"/>
        <end position="14"/>
    </location>
</feature>
<feature type="helix" evidence="4">
    <location>
        <begin position="20"/>
        <end position="30"/>
    </location>
</feature>
<feature type="helix" evidence="4">
    <location>
        <begin position="36"/>
        <end position="43"/>
    </location>
</feature>
<feature type="helix" evidence="4">
    <location>
        <begin position="50"/>
        <end position="67"/>
    </location>
</feature>
<feature type="helix" evidence="3">
    <location>
        <begin position="71"/>
        <end position="74"/>
    </location>
</feature>
<feature type="strand" evidence="4">
    <location>
        <begin position="76"/>
        <end position="79"/>
    </location>
</feature>
<feature type="strand" evidence="4">
    <location>
        <begin position="84"/>
        <end position="89"/>
    </location>
</feature>
<feature type="strand" evidence="3">
    <location>
        <begin position="91"/>
        <end position="93"/>
    </location>
</feature>
<feature type="helix" evidence="4">
    <location>
        <begin position="94"/>
        <end position="96"/>
    </location>
</feature>
<feature type="helix" evidence="4">
    <location>
        <begin position="97"/>
        <end position="102"/>
    </location>
</feature>
<feature type="strand" evidence="3">
    <location>
        <begin position="103"/>
        <end position="105"/>
    </location>
</feature>
<feature type="strand" evidence="4">
    <location>
        <begin position="108"/>
        <end position="115"/>
    </location>
</feature>
<feature type="turn" evidence="4">
    <location>
        <begin position="116"/>
        <end position="118"/>
    </location>
</feature>
<feature type="helix" evidence="4">
    <location>
        <begin position="124"/>
        <end position="133"/>
    </location>
</feature>
<feature type="strand" evidence="4">
    <location>
        <begin position="138"/>
        <end position="144"/>
    </location>
</feature>
<feature type="helix" evidence="4">
    <location>
        <begin position="146"/>
        <end position="149"/>
    </location>
</feature>
<feature type="helix" evidence="4">
    <location>
        <begin position="153"/>
        <end position="169"/>
    </location>
</feature>
<feature type="strand" evidence="4">
    <location>
        <begin position="177"/>
        <end position="179"/>
    </location>
</feature>
<feature type="turn" evidence="4">
    <location>
        <begin position="182"/>
        <end position="184"/>
    </location>
</feature>
<feature type="turn" evidence="4">
    <location>
        <begin position="186"/>
        <end position="188"/>
    </location>
</feature>
<feature type="helix" evidence="4">
    <location>
        <begin position="203"/>
        <end position="208"/>
    </location>
</feature>
<feature type="helix" evidence="3">
    <location>
        <begin position="216"/>
        <end position="218"/>
    </location>
</feature>
<feature type="strand" evidence="4">
    <location>
        <begin position="222"/>
        <end position="231"/>
    </location>
</feature>
<feature type="turn" evidence="4">
    <location>
        <begin position="232"/>
        <end position="234"/>
    </location>
</feature>
<feature type="strand" evidence="4">
    <location>
        <begin position="235"/>
        <end position="241"/>
    </location>
</feature>
<feature type="strand" evidence="4">
    <location>
        <begin position="252"/>
        <end position="256"/>
    </location>
</feature>
<feature type="helix" evidence="4">
    <location>
        <begin position="258"/>
        <end position="262"/>
    </location>
</feature>
<feature type="strand" evidence="4">
    <location>
        <begin position="267"/>
        <end position="275"/>
    </location>
</feature>
<feature type="strand" evidence="4">
    <location>
        <begin position="278"/>
        <end position="283"/>
    </location>
</feature>
<feature type="strand" evidence="4">
    <location>
        <begin position="288"/>
        <end position="293"/>
    </location>
</feature>
<feature type="helix" evidence="4">
    <location>
        <begin position="298"/>
        <end position="300"/>
    </location>
</feature>
<feature type="strand" evidence="4">
    <location>
        <begin position="306"/>
        <end position="312"/>
    </location>
</feature>
<feature type="strand" evidence="4">
    <location>
        <begin position="322"/>
        <end position="329"/>
    </location>
</feature>
<feature type="strand" evidence="4">
    <location>
        <begin position="343"/>
        <end position="346"/>
    </location>
</feature>
<feature type="strand" evidence="4">
    <location>
        <begin position="349"/>
        <end position="362"/>
    </location>
</feature>
<feature type="turn" evidence="4">
    <location>
        <begin position="364"/>
        <end position="366"/>
    </location>
</feature>
<feature type="strand" evidence="4">
    <location>
        <begin position="369"/>
        <end position="373"/>
    </location>
</feature>
<feature type="strand" evidence="4">
    <location>
        <begin position="382"/>
        <end position="391"/>
    </location>
</feature>
<feature type="turn" evidence="4">
    <location>
        <begin position="398"/>
        <end position="400"/>
    </location>
</feature>
<feature type="helix" evidence="4">
    <location>
        <begin position="402"/>
        <end position="404"/>
    </location>
</feature>
<feature type="strand" evidence="4">
    <location>
        <begin position="405"/>
        <end position="411"/>
    </location>
</feature>
<feature type="strand" evidence="4">
    <location>
        <begin position="414"/>
        <end position="425"/>
    </location>
</feature>
<sequence length="428" mass="47525">MPKEKPHVNIVFIGHVDHGKSTTIGRLLYDTGNIPETIIKKFEEMGEKGKSFKFAWVMDRLKEERERGITIDVAHTKFETPHRYITIIDAPGHRDFVKNMITGASQADAAVLVVAATDGVMPQTKEHAFLARTLGIKHIIVTINKMDMVNYDQKVFEKVKAQVEKLLKTLGYKDFPVIPTSAWNGDNVVKKSDKMPWYNGPTLIEALDQIPEPEKPIDKPLRIPIQDVYSIKGVGTVPVGRVETGKLKVGDVVIFEPASTIFHKPIQGEVKSIEMHHEPLQEALPGDNIGFNVRGVSKNDIKRGDVAGHTDKPPTVVRTKDTFKAQIIVLNHPTAITVGYSPVLHAHTAQIPVRFEQILAKVDPRTGNIVEENPQFIKTGDSAIVVLRPMKPVVLEPVKEIPQLGRFAIRDMGMTIAAGMVISIQKGE</sequence>
<accession>O59153</accession>
<gene>
    <name evidence="2" type="primary">tuf</name>
    <name type="ordered locus">PH1484</name>
    <name type="ORF">PHCC033</name>
</gene>
<name>EF1A_PYRHO</name>
<organism>
    <name type="scientific">Pyrococcus horikoshii (strain ATCC 700860 / DSM 12428 / JCM 9974 / NBRC 100139 / OT-3)</name>
    <dbReference type="NCBI Taxonomy" id="70601"/>
    <lineage>
        <taxon>Archaea</taxon>
        <taxon>Methanobacteriati</taxon>
        <taxon>Methanobacteriota</taxon>
        <taxon>Thermococci</taxon>
        <taxon>Thermococcales</taxon>
        <taxon>Thermococcaceae</taxon>
        <taxon>Pyrococcus</taxon>
    </lineage>
</organism>
<comment type="function">
    <text evidence="2">GTP hydrolase that promotes the GTP-dependent binding of aminoacyl-tRNA to the A-site of ribosomes during protein biosynthesis.</text>
</comment>
<comment type="catalytic activity">
    <reaction evidence="2">
        <text>GTP + H2O = GDP + phosphate + H(+)</text>
        <dbReference type="Rhea" id="RHEA:19669"/>
        <dbReference type="ChEBI" id="CHEBI:15377"/>
        <dbReference type="ChEBI" id="CHEBI:15378"/>
        <dbReference type="ChEBI" id="CHEBI:37565"/>
        <dbReference type="ChEBI" id="CHEBI:43474"/>
        <dbReference type="ChEBI" id="CHEBI:58189"/>
        <dbReference type="EC" id="3.6.5.3"/>
    </reaction>
    <physiologicalReaction direction="left-to-right" evidence="2">
        <dbReference type="Rhea" id="RHEA:19670"/>
    </physiologicalReaction>
</comment>
<comment type="subcellular location">
    <subcellularLocation>
        <location evidence="2">Cytoplasm</location>
    </subcellularLocation>
</comment>
<comment type="similarity">
    <text evidence="2">Belongs to the TRAFAC class translation factor GTPase superfamily. Classic translation factor GTPase family. EF-Tu/EF-1A subfamily.</text>
</comment>
<reference key="1">
    <citation type="journal article" date="1998" name="DNA Res.">
        <title>Complete sequence and gene organization of the genome of a hyper-thermophilic archaebacterium, Pyrococcus horikoshii OT3.</title>
        <authorList>
            <person name="Kawarabayasi Y."/>
            <person name="Sawada M."/>
            <person name="Horikawa H."/>
            <person name="Haikawa Y."/>
            <person name="Hino Y."/>
            <person name="Yamamoto S."/>
            <person name="Sekine M."/>
            <person name="Baba S."/>
            <person name="Kosugi H."/>
            <person name="Hosoyama A."/>
            <person name="Nagai Y."/>
            <person name="Sakai M."/>
            <person name="Ogura K."/>
            <person name="Otsuka R."/>
            <person name="Nakazawa H."/>
            <person name="Takamiya M."/>
            <person name="Ohfuku Y."/>
            <person name="Funahashi T."/>
            <person name="Tanaka T."/>
            <person name="Kudoh Y."/>
            <person name="Yamazaki J."/>
            <person name="Kushida N."/>
            <person name="Oguchi A."/>
            <person name="Aoki K."/>
            <person name="Yoshizawa T."/>
            <person name="Nakamura Y."/>
            <person name="Robb F.T."/>
            <person name="Horikoshi K."/>
            <person name="Masuchi Y."/>
            <person name="Shizuya H."/>
            <person name="Kikuchi H."/>
        </authorList>
    </citation>
    <scope>NUCLEOTIDE SEQUENCE [LARGE SCALE GENOMIC DNA]</scope>
    <source>
        <strain>ATCC 700860 / DSM 12428 / JCM 9974 / NBRC 100139 / OT-3</strain>
    </source>
</reference>
<proteinExistence type="evidence at protein level"/>
<protein>
    <recommendedName>
        <fullName evidence="2">Elongation factor 1-alpha</fullName>
        <shortName evidence="2">EF-1-alpha</shortName>
        <ecNumber evidence="2">3.6.5.3</ecNumber>
    </recommendedName>
    <alternativeName>
        <fullName evidence="2">Elongation factor Tu</fullName>
        <shortName evidence="2">EF-Tu</shortName>
    </alternativeName>
</protein>
<evidence type="ECO:0000250" key="1"/>
<evidence type="ECO:0000255" key="2">
    <source>
        <dbReference type="HAMAP-Rule" id="MF_00118"/>
    </source>
</evidence>
<evidence type="ECO:0007829" key="3">
    <source>
        <dbReference type="PDB" id="3WY9"/>
    </source>
</evidence>
<evidence type="ECO:0007829" key="4">
    <source>
        <dbReference type="PDB" id="7CSL"/>
    </source>
</evidence>
<dbReference type="EC" id="3.6.5.3" evidence="2"/>
<dbReference type="EMBL" id="BA000001">
    <property type="protein sequence ID" value="BAA30591.1"/>
    <property type="molecule type" value="Genomic_DNA"/>
</dbReference>
<dbReference type="PIR" id="G71023">
    <property type="entry name" value="G71023"/>
</dbReference>
<dbReference type="RefSeq" id="WP_010885563.1">
    <property type="nucleotide sequence ID" value="NC_000961.1"/>
</dbReference>
<dbReference type="PDB" id="3WY9">
    <property type="method" value="X-ray"/>
    <property type="resolution" value="2.30 A"/>
    <property type="chains" value="A/B=1-428"/>
</dbReference>
<dbReference type="PDB" id="3WYA">
    <property type="method" value="X-ray"/>
    <property type="resolution" value="2.35 A"/>
    <property type="chains" value="A=1-428"/>
</dbReference>
<dbReference type="PDB" id="7CSL">
    <property type="method" value="X-ray"/>
    <property type="resolution" value="2.00 A"/>
    <property type="chains" value="A/B=1-428"/>
</dbReference>
<dbReference type="PDBsum" id="3WY9"/>
<dbReference type="PDBsum" id="3WYA"/>
<dbReference type="PDBsum" id="7CSL"/>
<dbReference type="SMR" id="O59153"/>
<dbReference type="STRING" id="70601.gene:9378463"/>
<dbReference type="EnsemblBacteria" id="BAA30591">
    <property type="protein sequence ID" value="BAA30591"/>
    <property type="gene ID" value="BAA30591"/>
</dbReference>
<dbReference type="GeneID" id="1443801"/>
<dbReference type="KEGG" id="pho:PH1484"/>
<dbReference type="eggNOG" id="arCOG01561">
    <property type="taxonomic scope" value="Archaea"/>
</dbReference>
<dbReference type="OrthoDB" id="371718at2157"/>
<dbReference type="EvolutionaryTrace" id="O59153"/>
<dbReference type="Proteomes" id="UP000000752">
    <property type="component" value="Chromosome"/>
</dbReference>
<dbReference type="GO" id="GO:0005737">
    <property type="term" value="C:cytoplasm"/>
    <property type="evidence" value="ECO:0007669"/>
    <property type="project" value="UniProtKB-SubCell"/>
</dbReference>
<dbReference type="GO" id="GO:0005525">
    <property type="term" value="F:GTP binding"/>
    <property type="evidence" value="ECO:0007669"/>
    <property type="project" value="UniProtKB-UniRule"/>
</dbReference>
<dbReference type="GO" id="GO:0003924">
    <property type="term" value="F:GTPase activity"/>
    <property type="evidence" value="ECO:0007669"/>
    <property type="project" value="InterPro"/>
</dbReference>
<dbReference type="GO" id="GO:0003746">
    <property type="term" value="F:translation elongation factor activity"/>
    <property type="evidence" value="ECO:0007669"/>
    <property type="project" value="UniProtKB-UniRule"/>
</dbReference>
<dbReference type="CDD" id="cd01883">
    <property type="entry name" value="EF1_alpha"/>
    <property type="match status" value="1"/>
</dbReference>
<dbReference type="CDD" id="cd03693">
    <property type="entry name" value="EF1_alpha_II"/>
    <property type="match status" value="1"/>
</dbReference>
<dbReference type="CDD" id="cd03705">
    <property type="entry name" value="EF1_alpha_III"/>
    <property type="match status" value="1"/>
</dbReference>
<dbReference type="FunFam" id="2.40.30.10:FF:000003">
    <property type="entry name" value="Elongation factor 1-alpha"/>
    <property type="match status" value="1"/>
</dbReference>
<dbReference type="FunFam" id="2.40.30.10:FF:000005">
    <property type="entry name" value="Elongation factor 1-alpha"/>
    <property type="match status" value="1"/>
</dbReference>
<dbReference type="Gene3D" id="3.40.50.300">
    <property type="entry name" value="P-loop containing nucleotide triphosphate hydrolases"/>
    <property type="match status" value="1"/>
</dbReference>
<dbReference type="Gene3D" id="2.40.30.10">
    <property type="entry name" value="Translation factors"/>
    <property type="match status" value="2"/>
</dbReference>
<dbReference type="HAMAP" id="MF_00118_A">
    <property type="entry name" value="EF_Tu_A"/>
    <property type="match status" value="1"/>
</dbReference>
<dbReference type="InterPro" id="IPR004161">
    <property type="entry name" value="EFTu-like_2"/>
</dbReference>
<dbReference type="InterPro" id="IPR031157">
    <property type="entry name" value="G_TR_CS"/>
</dbReference>
<dbReference type="InterPro" id="IPR054696">
    <property type="entry name" value="GTP-eEF1A_C"/>
</dbReference>
<dbReference type="InterPro" id="IPR027417">
    <property type="entry name" value="P-loop_NTPase"/>
</dbReference>
<dbReference type="InterPro" id="IPR005225">
    <property type="entry name" value="Small_GTP-bd"/>
</dbReference>
<dbReference type="InterPro" id="IPR000795">
    <property type="entry name" value="T_Tr_GTP-bd_dom"/>
</dbReference>
<dbReference type="InterPro" id="IPR050100">
    <property type="entry name" value="TRAFAC_GTPase_members"/>
</dbReference>
<dbReference type="InterPro" id="IPR009000">
    <property type="entry name" value="Transl_B-barrel_sf"/>
</dbReference>
<dbReference type="InterPro" id="IPR009001">
    <property type="entry name" value="Transl_elong_EF1A/Init_IF2_C"/>
</dbReference>
<dbReference type="InterPro" id="IPR004539">
    <property type="entry name" value="Transl_elong_EF1A_euk/arc"/>
</dbReference>
<dbReference type="NCBIfam" id="TIGR00483">
    <property type="entry name" value="EF-1_alpha"/>
    <property type="match status" value="1"/>
</dbReference>
<dbReference type="NCBIfam" id="NF008969">
    <property type="entry name" value="PRK12317.1"/>
    <property type="match status" value="1"/>
</dbReference>
<dbReference type="NCBIfam" id="TIGR00231">
    <property type="entry name" value="small_GTP"/>
    <property type="match status" value="1"/>
</dbReference>
<dbReference type="PANTHER" id="PTHR23115">
    <property type="entry name" value="TRANSLATION FACTOR"/>
    <property type="match status" value="1"/>
</dbReference>
<dbReference type="Pfam" id="PF22594">
    <property type="entry name" value="GTP-eEF1A_C"/>
    <property type="match status" value="1"/>
</dbReference>
<dbReference type="Pfam" id="PF00009">
    <property type="entry name" value="GTP_EFTU"/>
    <property type="match status" value="1"/>
</dbReference>
<dbReference type="Pfam" id="PF03144">
    <property type="entry name" value="GTP_EFTU_D2"/>
    <property type="match status" value="1"/>
</dbReference>
<dbReference type="PRINTS" id="PR00315">
    <property type="entry name" value="ELONGATNFCT"/>
</dbReference>
<dbReference type="SUPFAM" id="SSF50465">
    <property type="entry name" value="EF-Tu/eEF-1alpha/eIF2-gamma C-terminal domain"/>
    <property type="match status" value="1"/>
</dbReference>
<dbReference type="SUPFAM" id="SSF52540">
    <property type="entry name" value="P-loop containing nucleoside triphosphate hydrolases"/>
    <property type="match status" value="1"/>
</dbReference>
<dbReference type="SUPFAM" id="SSF50447">
    <property type="entry name" value="Translation proteins"/>
    <property type="match status" value="1"/>
</dbReference>
<dbReference type="PROSITE" id="PS00301">
    <property type="entry name" value="G_TR_1"/>
    <property type="match status" value="1"/>
</dbReference>
<dbReference type="PROSITE" id="PS51722">
    <property type="entry name" value="G_TR_2"/>
    <property type="match status" value="1"/>
</dbReference>
<keyword id="KW-0002">3D-structure</keyword>
<keyword id="KW-0963">Cytoplasm</keyword>
<keyword id="KW-0251">Elongation factor</keyword>
<keyword id="KW-0342">GTP-binding</keyword>
<keyword id="KW-0378">Hydrolase</keyword>
<keyword id="KW-0460">Magnesium</keyword>
<keyword id="KW-0479">Metal-binding</keyword>
<keyword id="KW-0547">Nucleotide-binding</keyword>
<keyword id="KW-0648">Protein biosynthesis</keyword>